<feature type="chain" id="PRO_0000181438" description="Nicotinate-nucleotide adenylyltransferase">
    <location>
        <begin position="1"/>
        <end position="213"/>
    </location>
</feature>
<proteinExistence type="inferred from homology"/>
<dbReference type="EC" id="2.7.7.18" evidence="1"/>
<dbReference type="EMBL" id="AL513382">
    <property type="protein sequence ID" value="CAD05122.1"/>
    <property type="molecule type" value="Genomic_DNA"/>
</dbReference>
<dbReference type="EMBL" id="AE014613">
    <property type="protein sequence ID" value="AAO69825.1"/>
    <property type="molecule type" value="Genomic_DNA"/>
</dbReference>
<dbReference type="RefSeq" id="NP_455221.1">
    <property type="nucleotide sequence ID" value="NC_003198.1"/>
</dbReference>
<dbReference type="RefSeq" id="WP_010989126.1">
    <property type="nucleotide sequence ID" value="NZ_WSUR01000015.1"/>
</dbReference>
<dbReference type="SMR" id="Q8Z8H7"/>
<dbReference type="STRING" id="220341.gene:17584703"/>
<dbReference type="KEGG" id="stt:t2222"/>
<dbReference type="KEGG" id="sty:STY0696"/>
<dbReference type="PATRIC" id="fig|220341.7.peg.700"/>
<dbReference type="eggNOG" id="COG1057">
    <property type="taxonomic scope" value="Bacteria"/>
</dbReference>
<dbReference type="HOGENOM" id="CLU_069765_0_0_6"/>
<dbReference type="OMA" id="WIMGADS"/>
<dbReference type="OrthoDB" id="5295945at2"/>
<dbReference type="UniPathway" id="UPA00253">
    <property type="reaction ID" value="UER00332"/>
</dbReference>
<dbReference type="Proteomes" id="UP000000541">
    <property type="component" value="Chromosome"/>
</dbReference>
<dbReference type="Proteomes" id="UP000002670">
    <property type="component" value="Chromosome"/>
</dbReference>
<dbReference type="GO" id="GO:0005524">
    <property type="term" value="F:ATP binding"/>
    <property type="evidence" value="ECO:0007669"/>
    <property type="project" value="UniProtKB-KW"/>
</dbReference>
<dbReference type="GO" id="GO:0004515">
    <property type="term" value="F:nicotinate-nucleotide adenylyltransferase activity"/>
    <property type="evidence" value="ECO:0007669"/>
    <property type="project" value="UniProtKB-UniRule"/>
</dbReference>
<dbReference type="GO" id="GO:0009435">
    <property type="term" value="P:NAD biosynthetic process"/>
    <property type="evidence" value="ECO:0007669"/>
    <property type="project" value="UniProtKB-UniRule"/>
</dbReference>
<dbReference type="CDD" id="cd02165">
    <property type="entry name" value="NMNAT"/>
    <property type="match status" value="1"/>
</dbReference>
<dbReference type="FunFam" id="3.40.50.620:FF:000039">
    <property type="entry name" value="Probable nicotinate-nucleotide adenylyltransferase"/>
    <property type="match status" value="1"/>
</dbReference>
<dbReference type="Gene3D" id="3.40.50.620">
    <property type="entry name" value="HUPs"/>
    <property type="match status" value="1"/>
</dbReference>
<dbReference type="HAMAP" id="MF_00244">
    <property type="entry name" value="NaMN_adenylyltr"/>
    <property type="match status" value="1"/>
</dbReference>
<dbReference type="InterPro" id="IPR004821">
    <property type="entry name" value="Cyt_trans-like"/>
</dbReference>
<dbReference type="InterPro" id="IPR005248">
    <property type="entry name" value="NadD/NMNAT"/>
</dbReference>
<dbReference type="InterPro" id="IPR014729">
    <property type="entry name" value="Rossmann-like_a/b/a_fold"/>
</dbReference>
<dbReference type="NCBIfam" id="TIGR00125">
    <property type="entry name" value="cyt_tran_rel"/>
    <property type="match status" value="1"/>
</dbReference>
<dbReference type="NCBIfam" id="TIGR00482">
    <property type="entry name" value="nicotinate (nicotinamide) nucleotide adenylyltransferase"/>
    <property type="match status" value="1"/>
</dbReference>
<dbReference type="NCBIfam" id="NF000839">
    <property type="entry name" value="PRK00071.1-1"/>
    <property type="match status" value="1"/>
</dbReference>
<dbReference type="NCBIfam" id="NF000840">
    <property type="entry name" value="PRK00071.1-3"/>
    <property type="match status" value="1"/>
</dbReference>
<dbReference type="PANTHER" id="PTHR39321">
    <property type="entry name" value="NICOTINATE-NUCLEOTIDE ADENYLYLTRANSFERASE-RELATED"/>
    <property type="match status" value="1"/>
</dbReference>
<dbReference type="PANTHER" id="PTHR39321:SF3">
    <property type="entry name" value="PHOSPHOPANTETHEINE ADENYLYLTRANSFERASE"/>
    <property type="match status" value="1"/>
</dbReference>
<dbReference type="Pfam" id="PF01467">
    <property type="entry name" value="CTP_transf_like"/>
    <property type="match status" value="1"/>
</dbReference>
<dbReference type="SUPFAM" id="SSF52374">
    <property type="entry name" value="Nucleotidylyl transferase"/>
    <property type="match status" value="1"/>
</dbReference>
<keyword id="KW-0067">ATP-binding</keyword>
<keyword id="KW-0520">NAD</keyword>
<keyword id="KW-0547">Nucleotide-binding</keyword>
<keyword id="KW-0548">Nucleotidyltransferase</keyword>
<keyword id="KW-0662">Pyridine nucleotide biosynthesis</keyword>
<keyword id="KW-0808">Transferase</keyword>
<organism>
    <name type="scientific">Salmonella typhi</name>
    <dbReference type="NCBI Taxonomy" id="90370"/>
    <lineage>
        <taxon>Bacteria</taxon>
        <taxon>Pseudomonadati</taxon>
        <taxon>Pseudomonadota</taxon>
        <taxon>Gammaproteobacteria</taxon>
        <taxon>Enterobacterales</taxon>
        <taxon>Enterobacteriaceae</taxon>
        <taxon>Salmonella</taxon>
    </lineage>
</organism>
<gene>
    <name evidence="1" type="primary">nadD</name>
    <name type="ordered locus">STY0696</name>
    <name type="ordered locus">t2222</name>
</gene>
<protein>
    <recommendedName>
        <fullName>Nicotinate-nucleotide adenylyltransferase</fullName>
        <ecNumber evidence="1">2.7.7.18</ecNumber>
    </recommendedName>
    <alternativeName>
        <fullName evidence="1">Deamido-NAD(+) diphosphorylase</fullName>
    </alternativeName>
    <alternativeName>
        <fullName evidence="1">Deamido-NAD(+) pyrophosphorylase</fullName>
    </alternativeName>
    <alternativeName>
        <fullName evidence="1">Nicotinate mononucleotide adenylyltransferase</fullName>
        <shortName evidence="1">NaMN adenylyltransferase</shortName>
    </alternativeName>
</protein>
<comment type="function">
    <text evidence="1">Catalyzes the reversible adenylation of nicotinate mononucleotide (NaMN) to nicotinic acid adenine dinucleotide (NaAD).</text>
</comment>
<comment type="catalytic activity">
    <reaction evidence="1">
        <text>nicotinate beta-D-ribonucleotide + ATP + H(+) = deamido-NAD(+) + diphosphate</text>
        <dbReference type="Rhea" id="RHEA:22860"/>
        <dbReference type="ChEBI" id="CHEBI:15378"/>
        <dbReference type="ChEBI" id="CHEBI:30616"/>
        <dbReference type="ChEBI" id="CHEBI:33019"/>
        <dbReference type="ChEBI" id="CHEBI:57502"/>
        <dbReference type="ChEBI" id="CHEBI:58437"/>
        <dbReference type="EC" id="2.7.7.18"/>
    </reaction>
</comment>
<comment type="pathway">
    <text evidence="1">Cofactor biosynthesis; NAD(+) biosynthesis; deamido-NAD(+) from nicotinate D-ribonucleotide: step 1/1.</text>
</comment>
<comment type="similarity">
    <text evidence="1">Belongs to the NadD family.</text>
</comment>
<evidence type="ECO:0000255" key="1">
    <source>
        <dbReference type="HAMAP-Rule" id="MF_00244"/>
    </source>
</evidence>
<name>NADD_SALTI</name>
<reference key="1">
    <citation type="journal article" date="2001" name="Nature">
        <title>Complete genome sequence of a multiple drug resistant Salmonella enterica serovar Typhi CT18.</title>
        <authorList>
            <person name="Parkhill J."/>
            <person name="Dougan G."/>
            <person name="James K.D."/>
            <person name="Thomson N.R."/>
            <person name="Pickard D."/>
            <person name="Wain J."/>
            <person name="Churcher C.M."/>
            <person name="Mungall K.L."/>
            <person name="Bentley S.D."/>
            <person name="Holden M.T.G."/>
            <person name="Sebaihia M."/>
            <person name="Baker S."/>
            <person name="Basham D."/>
            <person name="Brooks K."/>
            <person name="Chillingworth T."/>
            <person name="Connerton P."/>
            <person name="Cronin A."/>
            <person name="Davis P."/>
            <person name="Davies R.M."/>
            <person name="Dowd L."/>
            <person name="White N."/>
            <person name="Farrar J."/>
            <person name="Feltwell T."/>
            <person name="Hamlin N."/>
            <person name="Haque A."/>
            <person name="Hien T.T."/>
            <person name="Holroyd S."/>
            <person name="Jagels K."/>
            <person name="Krogh A."/>
            <person name="Larsen T.S."/>
            <person name="Leather S."/>
            <person name="Moule S."/>
            <person name="O'Gaora P."/>
            <person name="Parry C."/>
            <person name="Quail M.A."/>
            <person name="Rutherford K.M."/>
            <person name="Simmonds M."/>
            <person name="Skelton J."/>
            <person name="Stevens K."/>
            <person name="Whitehead S."/>
            <person name="Barrell B.G."/>
        </authorList>
    </citation>
    <scope>NUCLEOTIDE SEQUENCE [LARGE SCALE GENOMIC DNA]</scope>
    <source>
        <strain>CT18</strain>
    </source>
</reference>
<reference key="2">
    <citation type="journal article" date="2003" name="J. Bacteriol.">
        <title>Comparative genomics of Salmonella enterica serovar Typhi strains Ty2 and CT18.</title>
        <authorList>
            <person name="Deng W."/>
            <person name="Liou S.-R."/>
            <person name="Plunkett G. III"/>
            <person name="Mayhew G.F."/>
            <person name="Rose D.J."/>
            <person name="Burland V."/>
            <person name="Kodoyianni V."/>
            <person name="Schwartz D.C."/>
            <person name="Blattner F.R."/>
        </authorList>
    </citation>
    <scope>NUCLEOTIDE SEQUENCE [LARGE SCALE GENOMIC DNA]</scope>
    <source>
        <strain>ATCC 700931 / Ty2</strain>
    </source>
</reference>
<accession>Q8Z8H7</accession>
<sequence>MKSLQALFGGTFDPVHYGHLKPVETLANLIGLSRVIIMPNNVPPHRPQPEASSAQRKYMLELAIADKPLFTLGERELQRNAPSYTAQTLKAWREEQGPEAPLAFIIGQDSLLNFPTWHDYDTILDNTHLIVCRRPGYPLEMTQAQHQQWLEQHLTHTPDDLHQLPAGKIYLAETPWLNISATLIRERLEKGESCDDLLPENVLNYINQQGLYR</sequence>